<protein>
    <recommendedName>
        <fullName evidence="1">Eukaryotic translation initiation factor 3 subunit K</fullName>
        <shortName evidence="1">eIF3k</shortName>
    </recommendedName>
    <alternativeName>
        <fullName evidence="1">eIF-3 p25</fullName>
    </alternativeName>
</protein>
<sequence length="221" mass="25799">MDHYVKMEDGKVMPIQEMLKSIERYNPEHLKVIEAYVEDQAKDNKYDLEANLACLKLYQFNPQMMNLDVTYTILLKSLTNFPHTDFVLCKCLLLPAQMNDDSVKEIVYLADILEKCDFTLFWSRVQKNPQFFKKITGFSESIRKFVCHVVGITFQSIEKQYLVRLLGDVDDKVLNAWVKKNGWKEEGEYILVAQQEGNIKTKHITEKIDFENLGPLMANCL</sequence>
<accession>B0XEA7</accession>
<organism>
    <name type="scientific">Culex quinquefasciatus</name>
    <name type="common">Southern house mosquito</name>
    <name type="synonym">Culex pungens</name>
    <dbReference type="NCBI Taxonomy" id="7176"/>
    <lineage>
        <taxon>Eukaryota</taxon>
        <taxon>Metazoa</taxon>
        <taxon>Ecdysozoa</taxon>
        <taxon>Arthropoda</taxon>
        <taxon>Hexapoda</taxon>
        <taxon>Insecta</taxon>
        <taxon>Pterygota</taxon>
        <taxon>Neoptera</taxon>
        <taxon>Endopterygota</taxon>
        <taxon>Diptera</taxon>
        <taxon>Nematocera</taxon>
        <taxon>Culicoidea</taxon>
        <taxon>Culicidae</taxon>
        <taxon>Culicinae</taxon>
        <taxon>Culicini</taxon>
        <taxon>Culex</taxon>
        <taxon>Culex</taxon>
    </lineage>
</organism>
<name>EIF3K_CULQU</name>
<comment type="function">
    <text evidence="1">Component of the eukaryotic translation initiation factor 3 (eIF-3) complex, which is involved in protein synthesis of a specialized repertoire of mRNAs and, together with other initiation factors, stimulates binding of mRNA and methionyl-tRNAi to the 40S ribosome. The eIF-3 complex specifically targets and initiates translation of a subset of mRNAs involved in cell proliferation.</text>
</comment>
<comment type="subunit">
    <text evidence="1">Component of the eukaryotic translation initiation factor 3 (eIF-3) complex.</text>
</comment>
<comment type="subcellular location">
    <subcellularLocation>
        <location evidence="1">Cytoplasm</location>
    </subcellularLocation>
</comment>
<comment type="similarity">
    <text evidence="1">Belongs to the eIF-3 subunit K family.</text>
</comment>
<comment type="sequence caution" evidence="3">
    <conflict type="erroneous gene model prediction">
        <sequence resource="EMBL-CDS" id="EDS25881"/>
    </conflict>
</comment>
<proteinExistence type="inferred from homology"/>
<evidence type="ECO:0000255" key="1">
    <source>
        <dbReference type="HAMAP-Rule" id="MF_03010"/>
    </source>
</evidence>
<evidence type="ECO:0000255" key="2">
    <source>
        <dbReference type="PROSITE-ProRule" id="PRU01185"/>
    </source>
</evidence>
<evidence type="ECO:0000305" key="3"/>
<dbReference type="EMBL" id="DS232814">
    <property type="protein sequence ID" value="EDS25881.1"/>
    <property type="status" value="ALT_SEQ"/>
    <property type="molecule type" value="Genomic_DNA"/>
</dbReference>
<dbReference type="RefSeq" id="XP_001867979.1">
    <property type="nucleotide sequence ID" value="XM_001867944.1"/>
</dbReference>
<dbReference type="SMR" id="B0XEA7"/>
<dbReference type="FunCoup" id="B0XEA7">
    <property type="interactions" value="1902"/>
</dbReference>
<dbReference type="STRING" id="7176.B0XEA7"/>
<dbReference type="EnsemblMetazoa" id="CQUJHB013178.R20499">
    <property type="protein sequence ID" value="CQUJHB013178.P20499"/>
    <property type="gene ID" value="CQUJHB013178"/>
</dbReference>
<dbReference type="EnsemblMetazoa" id="XM_001867944.2">
    <property type="protein sequence ID" value="XP_001867979.2"/>
    <property type="gene ID" value="LOC6051563"/>
</dbReference>
<dbReference type="KEGG" id="cqu:CpipJ_CPIJ017839"/>
<dbReference type="CTD" id="27335"/>
<dbReference type="VEuPathDB" id="VectorBase:CPIJ017839"/>
<dbReference type="VEuPathDB" id="VectorBase:CQUJHB013178"/>
<dbReference type="eggNOG" id="KOG3252">
    <property type="taxonomic scope" value="Eukaryota"/>
</dbReference>
<dbReference type="HOGENOM" id="CLU_886379_0_0_1"/>
<dbReference type="InParanoid" id="B0XEA7"/>
<dbReference type="OrthoDB" id="337745at2759"/>
<dbReference type="Proteomes" id="UP000002320">
    <property type="component" value="Unassembled WGS sequence"/>
</dbReference>
<dbReference type="GO" id="GO:0016282">
    <property type="term" value="C:eukaryotic 43S preinitiation complex"/>
    <property type="evidence" value="ECO:0007669"/>
    <property type="project" value="UniProtKB-UniRule"/>
</dbReference>
<dbReference type="GO" id="GO:0033290">
    <property type="term" value="C:eukaryotic 48S preinitiation complex"/>
    <property type="evidence" value="ECO:0007669"/>
    <property type="project" value="UniProtKB-UniRule"/>
</dbReference>
<dbReference type="GO" id="GO:0005852">
    <property type="term" value="C:eukaryotic translation initiation factor 3 complex"/>
    <property type="evidence" value="ECO:0007669"/>
    <property type="project" value="UniProtKB-UniRule"/>
</dbReference>
<dbReference type="GO" id="GO:0043022">
    <property type="term" value="F:ribosome binding"/>
    <property type="evidence" value="ECO:0007669"/>
    <property type="project" value="InterPro"/>
</dbReference>
<dbReference type="GO" id="GO:0003723">
    <property type="term" value="F:RNA binding"/>
    <property type="evidence" value="ECO:0007669"/>
    <property type="project" value="UniProtKB-UniRule"/>
</dbReference>
<dbReference type="GO" id="GO:0003743">
    <property type="term" value="F:translation initiation factor activity"/>
    <property type="evidence" value="ECO:0007669"/>
    <property type="project" value="UniProtKB-UniRule"/>
</dbReference>
<dbReference type="GO" id="GO:0001732">
    <property type="term" value="P:formation of cytoplasmic translation initiation complex"/>
    <property type="evidence" value="ECO:0007669"/>
    <property type="project" value="UniProtKB-UniRule"/>
</dbReference>
<dbReference type="GO" id="GO:0006446">
    <property type="term" value="P:regulation of translational initiation"/>
    <property type="evidence" value="ECO:0007669"/>
    <property type="project" value="InterPro"/>
</dbReference>
<dbReference type="FunFam" id="1.10.10.10:FF:000212">
    <property type="entry name" value="Eukaryotic translation initiation factor 3 subunit K"/>
    <property type="match status" value="1"/>
</dbReference>
<dbReference type="FunFam" id="1.25.40.250:FF:000001">
    <property type="entry name" value="Eukaryotic translation initiation factor 3 subunit K"/>
    <property type="match status" value="1"/>
</dbReference>
<dbReference type="Gene3D" id="1.25.40.250">
    <property type="entry name" value="ARM repeat, domain 1"/>
    <property type="match status" value="1"/>
</dbReference>
<dbReference type="Gene3D" id="1.10.10.10">
    <property type="entry name" value="Winged helix-like DNA-binding domain superfamily/Winged helix DNA-binding domain"/>
    <property type="match status" value="1"/>
</dbReference>
<dbReference type="HAMAP" id="MF_03010">
    <property type="entry name" value="eIF3k"/>
    <property type="match status" value="1"/>
</dbReference>
<dbReference type="InterPro" id="IPR016024">
    <property type="entry name" value="ARM-type_fold"/>
</dbReference>
<dbReference type="InterPro" id="IPR033464">
    <property type="entry name" value="CSN8_PSD8_EIF3K"/>
</dbReference>
<dbReference type="InterPro" id="IPR009374">
    <property type="entry name" value="eIF3k"/>
</dbReference>
<dbReference type="InterPro" id="IPR000717">
    <property type="entry name" value="PCI_dom"/>
</dbReference>
<dbReference type="InterPro" id="IPR016020">
    <property type="entry name" value="Transl_init_fac_sub12_N_euk"/>
</dbReference>
<dbReference type="InterPro" id="IPR036388">
    <property type="entry name" value="WH-like_DNA-bd_sf"/>
</dbReference>
<dbReference type="InterPro" id="IPR036390">
    <property type="entry name" value="WH_DNA-bd_sf"/>
</dbReference>
<dbReference type="PANTHER" id="PTHR13022">
    <property type="entry name" value="EUKARYOTIC TRANSLATION INITIATION FACTOR 3 SUBUNIT 11"/>
    <property type="match status" value="1"/>
</dbReference>
<dbReference type="PANTHER" id="PTHR13022:SF0">
    <property type="entry name" value="EUKARYOTIC TRANSLATION INITIATION FACTOR 3 SUBUNIT K"/>
    <property type="match status" value="1"/>
</dbReference>
<dbReference type="Pfam" id="PF10075">
    <property type="entry name" value="CSN8_PSD8_EIF3K"/>
    <property type="match status" value="1"/>
</dbReference>
<dbReference type="SUPFAM" id="SSF48371">
    <property type="entry name" value="ARM repeat"/>
    <property type="match status" value="1"/>
</dbReference>
<dbReference type="SUPFAM" id="SSF46785">
    <property type="entry name" value="Winged helix' DNA-binding domain"/>
    <property type="match status" value="1"/>
</dbReference>
<dbReference type="PROSITE" id="PS50250">
    <property type="entry name" value="PCI"/>
    <property type="match status" value="1"/>
</dbReference>
<feature type="chain" id="PRO_0000365039" description="Eukaryotic translation initiation factor 3 subunit K">
    <location>
        <begin position="1"/>
        <end position="221"/>
    </location>
</feature>
<feature type="domain" description="PCI" evidence="2">
    <location>
        <begin position="46"/>
        <end position="207"/>
    </location>
</feature>
<keyword id="KW-0963">Cytoplasm</keyword>
<keyword id="KW-0396">Initiation factor</keyword>
<keyword id="KW-0648">Protein biosynthesis</keyword>
<keyword id="KW-1185">Reference proteome</keyword>
<reference key="1">
    <citation type="submission" date="2007-03" db="EMBL/GenBank/DDBJ databases">
        <title>Annotation of Culex pipiens quinquefasciatus.</title>
        <authorList>
            <consortium name="The Broad Institute Genome Sequencing Platform"/>
            <person name="Atkinson P.W."/>
            <person name="Hemingway J."/>
            <person name="Christensen B.M."/>
            <person name="Higgs S."/>
            <person name="Kodira C.D."/>
            <person name="Hannick L.I."/>
            <person name="Megy K."/>
            <person name="O'Leary S.B."/>
            <person name="Pearson M."/>
            <person name="Haas B.J."/>
            <person name="Mauceli E."/>
            <person name="Wortman J.R."/>
            <person name="Lee N.H."/>
            <person name="Guigo R."/>
            <person name="Stanke M."/>
            <person name="Alvarado L."/>
            <person name="Amedeo P."/>
            <person name="Antoine C.H."/>
            <person name="Arensburger P."/>
            <person name="Bidwell S.L."/>
            <person name="Crawford M."/>
            <person name="Camaro F."/>
            <person name="Devon K."/>
            <person name="Engels R."/>
            <person name="Hammond M."/>
            <person name="Howarth C."/>
            <person name="Koehrsen M."/>
            <person name="Lawson D."/>
            <person name="Montgomery P."/>
            <person name="Nene V."/>
            <person name="Nusbaum C."/>
            <person name="Puiu D."/>
            <person name="Romero-Severson J."/>
            <person name="Severson D.W."/>
            <person name="Shumway M."/>
            <person name="Sisk P."/>
            <person name="Stolte C."/>
            <person name="Zeng Q."/>
            <person name="Eisenstadt E."/>
            <person name="Fraser-Liggett C.M."/>
            <person name="Strausberg R."/>
            <person name="Galagan J."/>
            <person name="Birren B."/>
            <person name="Collins F.H."/>
        </authorList>
    </citation>
    <scope>NUCLEOTIDE SEQUENCE [LARGE SCALE GENOMIC DNA]</scope>
    <source>
        <strain>JHB</strain>
    </source>
</reference>
<gene>
    <name type="ORF">CPIJ017839</name>
</gene>